<accession>P52123</accession>
<accession>Q2MAE8</accession>
<comment type="sequence caution" evidence="1">
    <conflict type="erroneous initiation">
        <sequence resource="EMBL-CDS" id="AAA79792"/>
    </conflict>
</comment>
<sequence>MGIFKAKNPCTKNTIFTTSNTLIYGGFMISLNDFYEQICRKRRDLAYHMSECEWAVDTDVLEEDHPEIRIELGRMREQFWSSEKIGTRVRLYSCDVPWETRHHTVNGQLEIKEEYTELYDPAQECWKNLSSNLTKETFLPLVIEPFSINDIFKAHLMFASISFFWGKSIMSENENVAFKAFHRAAELFDKCIGMTWFNISVCNQKKLSEVRRSAGKKGGKSKAEVYHIIQLKLVELINDSVPNDGWKNKVVAVNELIEPLWDFIQMSEFEINNQNKKYRVATMSQDALVDTILNQWSLKNEDVKQAFDSAVRRKKRSK</sequence>
<proteinExistence type="predicted"/>
<feature type="chain" id="PRO_0000169273" description="Uncharacterized protein YfjH">
    <location>
        <begin position="1"/>
        <end position="318"/>
    </location>
</feature>
<organism>
    <name type="scientific">Escherichia coli (strain K12)</name>
    <dbReference type="NCBI Taxonomy" id="83333"/>
    <lineage>
        <taxon>Bacteria</taxon>
        <taxon>Pseudomonadati</taxon>
        <taxon>Pseudomonadota</taxon>
        <taxon>Gammaproteobacteria</taxon>
        <taxon>Enterobacterales</taxon>
        <taxon>Enterobacteriaceae</taxon>
        <taxon>Escherichia</taxon>
    </lineage>
</organism>
<protein>
    <recommendedName>
        <fullName>Uncharacterized protein YfjH</fullName>
    </recommendedName>
</protein>
<evidence type="ECO:0000305" key="1"/>
<reference key="1">
    <citation type="journal article" date="1997" name="Science">
        <title>The complete genome sequence of Escherichia coli K-12.</title>
        <authorList>
            <person name="Blattner F.R."/>
            <person name="Plunkett G. III"/>
            <person name="Bloch C.A."/>
            <person name="Perna N.T."/>
            <person name="Burland V."/>
            <person name="Riley M."/>
            <person name="Collado-Vides J."/>
            <person name="Glasner J.D."/>
            <person name="Rode C.K."/>
            <person name="Mayhew G.F."/>
            <person name="Gregor J."/>
            <person name="Davis N.W."/>
            <person name="Kirkpatrick H.A."/>
            <person name="Goeden M.A."/>
            <person name="Rose D.J."/>
            <person name="Mau B."/>
            <person name="Shao Y."/>
        </authorList>
    </citation>
    <scope>NUCLEOTIDE SEQUENCE [LARGE SCALE GENOMIC DNA]</scope>
    <source>
        <strain>K12 / MG1655 / ATCC 47076</strain>
    </source>
</reference>
<reference key="2">
    <citation type="journal article" date="2006" name="Mol. Syst. Biol.">
        <title>Highly accurate genome sequences of Escherichia coli K-12 strains MG1655 and W3110.</title>
        <authorList>
            <person name="Hayashi K."/>
            <person name="Morooka N."/>
            <person name="Yamamoto Y."/>
            <person name="Fujita K."/>
            <person name="Isono K."/>
            <person name="Choi S."/>
            <person name="Ohtsubo E."/>
            <person name="Baba T."/>
            <person name="Wanner B.L."/>
            <person name="Mori H."/>
            <person name="Horiuchi T."/>
        </authorList>
    </citation>
    <scope>NUCLEOTIDE SEQUENCE [LARGE SCALE GENOMIC DNA]</scope>
    <source>
        <strain>K12 / W3110 / ATCC 27325 / DSM 5911</strain>
    </source>
</reference>
<keyword id="KW-1185">Reference proteome</keyword>
<dbReference type="EMBL" id="U36840">
    <property type="protein sequence ID" value="AAA79792.1"/>
    <property type="status" value="ALT_INIT"/>
    <property type="molecule type" value="Genomic_DNA"/>
</dbReference>
<dbReference type="EMBL" id="U00096">
    <property type="protein sequence ID" value="AAC75671.1"/>
    <property type="molecule type" value="Genomic_DNA"/>
</dbReference>
<dbReference type="EMBL" id="AP009048">
    <property type="protein sequence ID" value="BAE76758.1"/>
    <property type="molecule type" value="Genomic_DNA"/>
</dbReference>
<dbReference type="PIR" id="A65041">
    <property type="entry name" value="A65041"/>
</dbReference>
<dbReference type="RefSeq" id="NP_417112.1">
    <property type="nucleotide sequence ID" value="NC_000913.3"/>
</dbReference>
<dbReference type="RefSeq" id="WP_000510827.1">
    <property type="nucleotide sequence ID" value="NZ_LN832404.1"/>
</dbReference>
<dbReference type="BioGRID" id="4261279">
    <property type="interactions" value="16"/>
</dbReference>
<dbReference type="STRING" id="511145.b2623"/>
<dbReference type="PaxDb" id="511145-b2623"/>
<dbReference type="EnsemblBacteria" id="AAC75671">
    <property type="protein sequence ID" value="AAC75671"/>
    <property type="gene ID" value="b2623"/>
</dbReference>
<dbReference type="GeneID" id="946123"/>
<dbReference type="KEGG" id="ecj:JW2603"/>
<dbReference type="KEGG" id="eco:b2623"/>
<dbReference type="PATRIC" id="fig|511145.12.peg.2720"/>
<dbReference type="EchoBASE" id="EB2986"/>
<dbReference type="eggNOG" id="ENOG5032QX4">
    <property type="taxonomic scope" value="Bacteria"/>
</dbReference>
<dbReference type="HOGENOM" id="CLU_082681_0_0_6"/>
<dbReference type="InParanoid" id="P52123"/>
<dbReference type="OMA" id="HRYNDSH"/>
<dbReference type="OrthoDB" id="6629071at2"/>
<dbReference type="BioCyc" id="EcoCyc:G7359-MONOMER"/>
<dbReference type="PRO" id="PR:P52123"/>
<dbReference type="Proteomes" id="UP000000625">
    <property type="component" value="Chromosome"/>
</dbReference>
<name>YFJH_ECOLI</name>
<gene>
    <name type="primary">yfjH</name>
    <name type="ordered locus">b2623</name>
    <name type="ordered locus">JW2603</name>
</gene>